<protein>
    <recommendedName>
        <fullName>Metallothionein A</fullName>
        <shortName>MT-A</shortName>
    </recommendedName>
</protein>
<name>MTA_THECR</name>
<proteinExistence type="inferred from homology"/>
<organism>
    <name type="scientific">Thermarces cerberus</name>
    <name type="common">Hydrothermal vent eelpout</name>
    <name type="synonym">Vent-endemic eelpout</name>
    <dbReference type="NCBI Taxonomy" id="48414"/>
    <lineage>
        <taxon>Eukaryota</taxon>
        <taxon>Metazoa</taxon>
        <taxon>Chordata</taxon>
        <taxon>Craniata</taxon>
        <taxon>Vertebrata</taxon>
        <taxon>Euteleostomi</taxon>
        <taxon>Actinopterygii</taxon>
        <taxon>Neopterygii</taxon>
        <taxon>Teleostei</taxon>
        <taxon>Neoteleostei</taxon>
        <taxon>Acanthomorphata</taxon>
        <taxon>Eupercaria</taxon>
        <taxon>Perciformes</taxon>
        <taxon>Cottioidei</taxon>
        <taxon>Zoarcales</taxon>
        <taxon>Zoarcidae</taxon>
        <taxon>Lycodinae</taxon>
        <taxon>Thermarces</taxon>
    </lineage>
</organism>
<accession>P52721</accession>
<feature type="chain" id="PRO_0000197317" description="Metallothionein A">
    <location>
        <begin position="1"/>
        <end position="60"/>
    </location>
</feature>
<feature type="region of interest" description="Beta">
    <location>
        <begin position="1"/>
        <end position="28"/>
    </location>
</feature>
<feature type="region of interest" description="Alpha">
    <location>
        <begin position="29"/>
        <end position="60"/>
    </location>
</feature>
<feature type="binding site" evidence="2">
    <location>
        <position position="4"/>
    </location>
    <ligand>
        <name>a divalent metal cation</name>
        <dbReference type="ChEBI" id="CHEBI:60240"/>
        <label>1</label>
        <note>in cluster B</note>
    </ligand>
</feature>
<feature type="binding site" evidence="2">
    <location>
        <position position="6"/>
    </location>
    <ligand>
        <name>a divalent metal cation</name>
        <dbReference type="ChEBI" id="CHEBI:60240"/>
        <label>1</label>
        <note>in cluster B</note>
    </ligand>
</feature>
<feature type="binding site" evidence="2">
    <location>
        <position position="6"/>
    </location>
    <ligand>
        <name>a divalent metal cation</name>
        <dbReference type="ChEBI" id="CHEBI:60240"/>
        <label>2</label>
        <note>in cluster B</note>
    </ligand>
</feature>
<feature type="binding site" evidence="2">
    <location>
        <position position="12"/>
    </location>
    <ligand>
        <name>a divalent metal cation</name>
        <dbReference type="ChEBI" id="CHEBI:60240"/>
        <label>2</label>
        <note>in cluster B</note>
    </ligand>
</feature>
<feature type="binding site" evidence="2">
    <location>
        <position position="14"/>
    </location>
    <ligand>
        <name>a divalent metal cation</name>
        <dbReference type="ChEBI" id="CHEBI:60240"/>
        <label>2</label>
        <note>in cluster B</note>
    </ligand>
</feature>
<feature type="binding site" evidence="2">
    <location>
        <position position="14"/>
    </location>
    <ligand>
        <name>a divalent metal cation</name>
        <dbReference type="ChEBI" id="CHEBI:60240"/>
        <label>3</label>
        <note>in cluster B</note>
    </ligand>
</feature>
<feature type="binding site" evidence="2">
    <location>
        <position position="18"/>
    </location>
    <ligand>
        <name>a divalent metal cation</name>
        <dbReference type="ChEBI" id="CHEBI:60240"/>
        <label>3</label>
        <note>in cluster B</note>
    </ligand>
</feature>
<feature type="binding site" evidence="2">
    <location>
        <position position="20"/>
    </location>
    <ligand>
        <name>a divalent metal cation</name>
        <dbReference type="ChEBI" id="CHEBI:60240"/>
        <label>1</label>
        <note>in cluster B</note>
    </ligand>
</feature>
<feature type="binding site" evidence="2">
    <location>
        <position position="23"/>
    </location>
    <ligand>
        <name>a divalent metal cation</name>
        <dbReference type="ChEBI" id="CHEBI:60240"/>
        <label>1</label>
        <note>in cluster B</note>
    </ligand>
</feature>
<feature type="binding site" evidence="2">
    <location>
        <position position="23"/>
    </location>
    <ligand>
        <name>a divalent metal cation</name>
        <dbReference type="ChEBI" id="CHEBI:60240"/>
        <label>3</label>
        <note>in cluster B</note>
    </ligand>
</feature>
<feature type="binding site" evidence="2">
    <location>
        <position position="25"/>
    </location>
    <ligand>
        <name>a divalent metal cation</name>
        <dbReference type="ChEBI" id="CHEBI:60240"/>
        <label>2</label>
        <note>in cluster B</note>
    </ligand>
</feature>
<feature type="binding site" evidence="2">
    <location>
        <position position="28"/>
    </location>
    <ligand>
        <name>a divalent metal cation</name>
        <dbReference type="ChEBI" id="CHEBI:60240"/>
        <label>3</label>
        <note>in cluster B</note>
    </ligand>
</feature>
<feature type="binding site" evidence="2">
    <location>
        <position position="32"/>
    </location>
    <ligand>
        <name>a divalent metal cation</name>
        <dbReference type="ChEBI" id="CHEBI:60240"/>
        <label>4</label>
        <note>in cluster A</note>
    </ligand>
</feature>
<feature type="binding site" evidence="2">
    <location>
        <position position="33"/>
    </location>
    <ligand>
        <name>a divalent metal cation</name>
        <dbReference type="ChEBI" id="CHEBI:60240"/>
        <label>4</label>
        <note>in cluster A</note>
    </ligand>
</feature>
<feature type="binding site" evidence="2">
    <location>
        <position position="33"/>
    </location>
    <ligand>
        <name>a divalent metal cation</name>
        <dbReference type="ChEBI" id="CHEBI:60240"/>
        <label>5</label>
        <note>in cluster A</note>
    </ligand>
</feature>
<feature type="binding site" evidence="2">
    <location>
        <position position="35"/>
    </location>
    <ligand>
        <name>a divalent metal cation</name>
        <dbReference type="ChEBI" id="CHEBI:60240"/>
        <label>5</label>
        <note>in cluster A</note>
    </ligand>
</feature>
<feature type="binding site" evidence="2">
    <location>
        <position position="36"/>
    </location>
    <ligand>
        <name>a divalent metal cation</name>
        <dbReference type="ChEBI" id="CHEBI:60240"/>
        <label>5</label>
        <note>in cluster A</note>
    </ligand>
</feature>
<feature type="binding site" evidence="2">
    <location>
        <position position="36"/>
    </location>
    <ligand>
        <name>a divalent metal cation</name>
        <dbReference type="ChEBI" id="CHEBI:60240"/>
        <label>6</label>
        <note>in cluster A</note>
    </ligand>
</feature>
<feature type="binding site" evidence="2">
    <location>
        <position position="40"/>
    </location>
    <ligand>
        <name>a divalent metal cation</name>
        <dbReference type="ChEBI" id="CHEBI:60240"/>
        <label>6</label>
        <note>in cluster A</note>
    </ligand>
</feature>
<feature type="binding site" evidence="2">
    <location>
        <position position="43"/>
    </location>
    <ligand>
        <name>a divalent metal cation</name>
        <dbReference type="ChEBI" id="CHEBI:60240"/>
        <label>4</label>
        <note>in cluster A</note>
    </ligand>
</feature>
<feature type="binding site" evidence="2">
    <location>
        <position position="43"/>
    </location>
    <ligand>
        <name>a divalent metal cation</name>
        <dbReference type="ChEBI" id="CHEBI:60240"/>
        <label>6</label>
        <note>in cluster A</note>
    </ligand>
</feature>
<feature type="binding site" evidence="2">
    <location>
        <position position="47"/>
    </location>
    <ligand>
        <name>a divalent metal cation</name>
        <dbReference type="ChEBI" id="CHEBI:60240"/>
        <label>4</label>
        <note>in cluster A</note>
    </ligand>
</feature>
<feature type="binding site" evidence="2">
    <location>
        <position position="49"/>
    </location>
    <ligand>
        <name>a divalent metal cation</name>
        <dbReference type="ChEBI" id="CHEBI:60240"/>
        <label>5</label>
        <note>in cluster A</note>
    </ligand>
</feature>
<feature type="binding site" evidence="2">
    <location>
        <position position="49"/>
    </location>
    <ligand>
        <name>a divalent metal cation</name>
        <dbReference type="ChEBI" id="CHEBI:60240"/>
        <label>7</label>
        <note>in cluster A</note>
    </ligand>
</feature>
<feature type="binding site" evidence="3">
    <location>
        <position position="54"/>
    </location>
    <ligand>
        <name>a divalent metal cation</name>
        <dbReference type="ChEBI" id="CHEBI:60240"/>
        <label>7</label>
        <note>in cluster A</note>
    </ligand>
</feature>
<feature type="binding site" evidence="2">
    <location>
        <position position="58"/>
    </location>
    <ligand>
        <name>a divalent metal cation</name>
        <dbReference type="ChEBI" id="CHEBI:60240"/>
        <label>7</label>
        <note>in cluster A</note>
    </ligand>
</feature>
<feature type="binding site" evidence="2">
    <location>
        <position position="59"/>
    </location>
    <ligand>
        <name>a divalent metal cation</name>
        <dbReference type="ChEBI" id="CHEBI:60240"/>
        <label>6</label>
        <note>in cluster A</note>
    </ligand>
</feature>
<feature type="binding site" evidence="2">
    <location>
        <position position="59"/>
    </location>
    <ligand>
        <name>a divalent metal cation</name>
        <dbReference type="ChEBI" id="CHEBI:60240"/>
        <label>7</label>
        <note>in cluster A</note>
    </ligand>
</feature>
<reference key="1">
    <citation type="submission" date="1996-04" db="EMBL/GenBank/DDBJ databases">
        <title>The use of metallothionein genes for determining the phylogenetic and evolutionary relationship between extant teleosts.</title>
        <authorList>
            <person name="Kille P."/>
            <person name="Olsson P.-E."/>
        </authorList>
    </citation>
    <scope>NUCLEOTIDE SEQUENCE [MRNA]</scope>
    <source>
        <tissue>Liver</tissue>
    </source>
</reference>
<sequence length="60" mass="6119">MDPCECSKTGTCKCGDSCKCTNCSCTTCKKSCCPCCPSGCTKCASGCVCKGKTCDTSCCQ</sequence>
<gene>
    <name type="primary">mta</name>
</gene>
<evidence type="ECO:0000250" key="1"/>
<evidence type="ECO:0000250" key="2">
    <source>
        <dbReference type="UniProtKB" id="P02795"/>
    </source>
</evidence>
<evidence type="ECO:0000250" key="3">
    <source>
        <dbReference type="UniProtKB" id="P62339"/>
    </source>
</evidence>
<evidence type="ECO:0000305" key="4"/>
<comment type="function">
    <text evidence="1">Metallothioneins have a high content of cysteine residues that bind various heavy metals.</text>
</comment>
<comment type="domain">
    <text>Class I metallothioneins contain 2 metal-binding domains: four divalent ions are chelated within cluster A of the alpha domain and are coordinated via cysteinyl thiolate bridges to 11 cysteine ligands. Cluster B, the corresponding region within the beta domain, can ligate three divalent ions to 9 cysteines.</text>
</comment>
<comment type="similarity">
    <text evidence="4">Belongs to the metallothionein superfamily. Type 1 family.</text>
</comment>
<keyword id="KW-0479">Metal-binding</keyword>
<keyword id="KW-0480">Metal-thiolate cluster</keyword>
<dbReference type="EMBL" id="X97277">
    <property type="protein sequence ID" value="CAA65932.1"/>
    <property type="molecule type" value="mRNA"/>
</dbReference>
<dbReference type="SMR" id="P52721"/>
<dbReference type="GO" id="GO:0046872">
    <property type="term" value="F:metal ion binding"/>
    <property type="evidence" value="ECO:0007669"/>
    <property type="project" value="UniProtKB-KW"/>
</dbReference>
<dbReference type="FunFam" id="4.10.10.10:FF:000001">
    <property type="entry name" value="Metallothionein"/>
    <property type="match status" value="1"/>
</dbReference>
<dbReference type="Gene3D" id="4.10.10.10">
    <property type="entry name" value="Metallothionein Isoform II"/>
    <property type="match status" value="1"/>
</dbReference>
<dbReference type="InterPro" id="IPR017854">
    <property type="entry name" value="Metalthion_dom_sf"/>
</dbReference>
<dbReference type="InterPro" id="IPR023587">
    <property type="entry name" value="Metalthion_dom_sf_vert"/>
</dbReference>
<dbReference type="InterPro" id="IPR000006">
    <property type="entry name" value="Metalthion_vert"/>
</dbReference>
<dbReference type="InterPro" id="IPR018064">
    <property type="entry name" value="Metalthion_vert_metal_BS"/>
</dbReference>
<dbReference type="PANTHER" id="PTHR23299">
    <property type="entry name" value="METALLOTHIONEIN"/>
    <property type="match status" value="1"/>
</dbReference>
<dbReference type="PANTHER" id="PTHR23299:SF24">
    <property type="entry name" value="METALLOTHIONEIN-1X"/>
    <property type="match status" value="1"/>
</dbReference>
<dbReference type="Pfam" id="PF00131">
    <property type="entry name" value="Metallothio"/>
    <property type="match status" value="1"/>
</dbReference>
<dbReference type="PRINTS" id="PR00860">
    <property type="entry name" value="MTVERTEBRATE"/>
</dbReference>
<dbReference type="SUPFAM" id="SSF57868">
    <property type="entry name" value="Metallothionein"/>
    <property type="match status" value="1"/>
</dbReference>
<dbReference type="PROSITE" id="PS00203">
    <property type="entry name" value="METALLOTHIONEIN_VRT"/>
    <property type="match status" value="1"/>
</dbReference>